<feature type="chain" id="PRO_0000450027" description="Glycerol-3-phosphate acyltransferase RAM2">
    <location>
        <begin position="1"/>
        <end position="479"/>
    </location>
</feature>
<feature type="transmembrane region" description="Helical" evidence="2">
    <location>
        <begin position="14"/>
        <end position="34"/>
    </location>
</feature>
<feature type="transmembrane region" description="Helical" evidence="2">
    <location>
        <begin position="37"/>
        <end position="57"/>
    </location>
</feature>
<feature type="transmembrane region" description="Helical" evidence="2">
    <location>
        <begin position="215"/>
        <end position="235"/>
    </location>
</feature>
<feature type="transmembrane region" description="Helical" evidence="2">
    <location>
        <begin position="237"/>
        <end position="257"/>
    </location>
</feature>
<feature type="short sequence motif" description="HXXXXD motif" evidence="1">
    <location>
        <begin position="284"/>
        <end position="289"/>
    </location>
</feature>
<feature type="glycosylation site" description="N-linked (GlcNAc...) asparagine" evidence="3">
    <location>
        <position position="448"/>
    </location>
</feature>
<sequence length="479" mass="52755">MDGTLLVGRSSFPYFALVAFEVGGIFRLLFLVLASPLAGLLYYFISESAGIRVLIFATFAGMKVSDIESVARAVLPKFYSSDLHPETWHVFSSCGKRCVLTANPRIMVEGFLKEYLGADMVIGTEISMYKGRATGFVNKPGILVGDNKAMALKKAFCSTSTPDIGLGDRKTDFPFMNLCKESYIVRPDPGVKPMSQDKLPKPIVFHDGRLVQKPSPLMALMIILWIPVGFLLACLRIAAGALLPMPLVYYAFWALGVRVKVKGNPPPPAKKSTDQTGVLFICSHRTLLDPIFLSTSLGRPIPAVTYSVSRLSEIISPIKTVRLSRDRVTDANMIKKMLEEGDLVICPEGTTCREPFLLRFSALFAELTDELVPVAMSNKMSMFHGTTARGWKGMDPFYFFMNPSPTYEVTFLNKLPYDLTCKAGKSSHDVANYIQRTIAATLSYECTNFTRKDKYKALAGNDGTVTTKPGLAAKKVMGC</sequence>
<dbReference type="EC" id="2.3.1.15" evidence="6"/>
<dbReference type="EMBL" id="KR612267">
    <property type="protein sequence ID" value="ALC79557.1"/>
    <property type="molecule type" value="mRNA"/>
</dbReference>
<dbReference type="GlyCosmos" id="A0A0M4FCN7">
    <property type="glycosylation" value="1 site, No reported glycans"/>
</dbReference>
<dbReference type="UniPathway" id="UPA00230"/>
<dbReference type="GO" id="GO:0016020">
    <property type="term" value="C:membrane"/>
    <property type="evidence" value="ECO:0007669"/>
    <property type="project" value="UniProtKB-SubCell"/>
</dbReference>
<dbReference type="GO" id="GO:0090447">
    <property type="term" value="F:glycerol-3-phosphate 2-O-acyltransferase activity"/>
    <property type="evidence" value="ECO:0007669"/>
    <property type="project" value="TreeGrafter"/>
</dbReference>
<dbReference type="GO" id="GO:0004366">
    <property type="term" value="F:glycerol-3-phosphate O-acyltransferase activity"/>
    <property type="evidence" value="ECO:0007669"/>
    <property type="project" value="UniProtKB-EC"/>
</dbReference>
<dbReference type="GO" id="GO:0016791">
    <property type="term" value="F:phosphatase activity"/>
    <property type="evidence" value="ECO:0007669"/>
    <property type="project" value="TreeGrafter"/>
</dbReference>
<dbReference type="GO" id="GO:0010143">
    <property type="term" value="P:cutin biosynthetic process"/>
    <property type="evidence" value="ECO:0007669"/>
    <property type="project" value="TreeGrafter"/>
</dbReference>
<dbReference type="GO" id="GO:0046486">
    <property type="term" value="P:glycerolipid metabolic process"/>
    <property type="evidence" value="ECO:0007669"/>
    <property type="project" value="UniProtKB-UniPathway"/>
</dbReference>
<dbReference type="GO" id="GO:0009610">
    <property type="term" value="P:response to symbiotic fungus"/>
    <property type="evidence" value="ECO:0000270"/>
    <property type="project" value="UniProtKB"/>
</dbReference>
<dbReference type="CDD" id="cd06551">
    <property type="entry name" value="LPLAT"/>
    <property type="match status" value="1"/>
</dbReference>
<dbReference type="FunFam" id="3.40.50.1000:FF:000243">
    <property type="entry name" value="Glycerol-3-phosphate 2-O-acyltransferase 6"/>
    <property type="match status" value="1"/>
</dbReference>
<dbReference type="Gene3D" id="3.40.50.1000">
    <property type="entry name" value="HAD superfamily/HAD-like"/>
    <property type="match status" value="1"/>
</dbReference>
<dbReference type="Gene3D" id="1.20.1440.100">
    <property type="entry name" value="SG protein - dephosphorylation function"/>
    <property type="match status" value="1"/>
</dbReference>
<dbReference type="InterPro" id="IPR056462">
    <property type="entry name" value="HAD_RAM2/GPAT1-8"/>
</dbReference>
<dbReference type="InterPro" id="IPR023214">
    <property type="entry name" value="HAD_sf"/>
</dbReference>
<dbReference type="InterPro" id="IPR002123">
    <property type="entry name" value="Plipid/glycerol_acylTrfase"/>
</dbReference>
<dbReference type="PANTHER" id="PTHR15486">
    <property type="entry name" value="ANCIENT UBIQUITOUS PROTEIN"/>
    <property type="match status" value="1"/>
</dbReference>
<dbReference type="PANTHER" id="PTHR15486:SF91">
    <property type="entry name" value="PHOSPHOLIPID_GLYCEROL ACYLTRANSFERASE DOMAIN-CONTAINING PROTEIN"/>
    <property type="match status" value="1"/>
</dbReference>
<dbReference type="Pfam" id="PF01553">
    <property type="entry name" value="Acyltransferase"/>
    <property type="match status" value="1"/>
</dbReference>
<dbReference type="Pfam" id="PF23270">
    <property type="entry name" value="HAD_RAM2_N"/>
    <property type="match status" value="1"/>
</dbReference>
<dbReference type="SMART" id="SM00563">
    <property type="entry name" value="PlsC"/>
    <property type="match status" value="1"/>
</dbReference>
<dbReference type="SUPFAM" id="SSF69593">
    <property type="entry name" value="Glycerol-3-phosphate (1)-acyltransferase"/>
    <property type="match status" value="1"/>
</dbReference>
<name>RAM2_PETHY</name>
<protein>
    <recommendedName>
        <fullName evidence="5">Glycerol-3-phosphate acyltransferase RAM2</fullName>
        <ecNumber evidence="6">2.3.1.15</ecNumber>
    </recommendedName>
    <alternativeName>
        <fullName evidence="5">Protein REQUIRED FOR ARBUSCULAR MYCORRHIZATION 2</fullName>
    </alternativeName>
</protein>
<reference key="1">
    <citation type="journal article" date="2015" name="Plant Physiol.">
        <title>The Petunia GRAS transcription factor ATA/RAM1 regulates symbiotic gene expression and fungal morphogenesis in arbuscular mycorrhiza.</title>
        <authorList>
            <person name="Rich M.K."/>
            <person name="Schorderet M."/>
            <person name="Bapaume L."/>
            <person name="Falquet L."/>
            <person name="Morel P."/>
            <person name="Vandenbussche M."/>
            <person name="Reinhardt D."/>
        </authorList>
    </citation>
    <scope>NUCLEOTIDE SEQUENCE [MRNA]</scope>
    <scope>INDUCTION BY RAM1 AND RHIZOPHAGUS IRREGULARIS</scope>
    <source>
        <strain>cv. W138</strain>
    </source>
</reference>
<keyword id="KW-0012">Acyltransferase</keyword>
<keyword id="KW-0325">Glycoprotein</keyword>
<keyword id="KW-0472">Membrane</keyword>
<keyword id="KW-0808">Transferase</keyword>
<keyword id="KW-0812">Transmembrane</keyword>
<keyword id="KW-1133">Transmembrane helix</keyword>
<gene>
    <name evidence="5" type="primary">RAM2</name>
</gene>
<proteinExistence type="evidence at transcript level"/>
<accession>A0A0M4FCN7</accession>
<comment type="function">
    <text evidence="1 4">Involved in the production of cutin monomers (By similarity). Esterifies acyl-group from acyl-ACP to the sn-2 position of glycerol-3-phosphate, a step in cutin biosynthesis (By similarity). Required for colonization of the root by mycorrhizal fungi, and appropriate hyphopodia and arbuscule formation (PubMed:25971550). Cutin monomers act as plant signals that promote colonization by arbuscular mycorrhizal fungi (By similarity). This signaling function has been recruited by pathogenic oomycetes to facilitate appressoria formation and their own invasion (By similarity).</text>
</comment>
<comment type="catalytic activity">
    <reaction evidence="6">
        <text>sn-glycerol 3-phosphate + an acyl-CoA = a 1-acyl-sn-glycero-3-phosphate + CoA</text>
        <dbReference type="Rhea" id="RHEA:15325"/>
        <dbReference type="ChEBI" id="CHEBI:57287"/>
        <dbReference type="ChEBI" id="CHEBI:57597"/>
        <dbReference type="ChEBI" id="CHEBI:57970"/>
        <dbReference type="ChEBI" id="CHEBI:58342"/>
        <dbReference type="EC" id="2.3.1.15"/>
    </reaction>
</comment>
<comment type="pathway">
    <text evidence="6">Lipid metabolism; glycerolipid metabolism.</text>
</comment>
<comment type="subcellular location">
    <subcellularLocation>
        <location evidence="2">Membrane</location>
        <topology evidence="2">Multi-pass membrane protein</topology>
    </subcellularLocation>
</comment>
<comment type="induction">
    <text evidence="4">Regulated by RAM1 during arbuscular mycorrhiza (AM) formation after inoculation with Rhizophagus irregularis.</text>
</comment>
<comment type="similarity">
    <text evidence="6">Belongs to the GPAT/DAPAT family.</text>
</comment>
<evidence type="ECO:0000250" key="1">
    <source>
        <dbReference type="UniProtKB" id="K7PEY4"/>
    </source>
</evidence>
<evidence type="ECO:0000255" key="2"/>
<evidence type="ECO:0000255" key="3">
    <source>
        <dbReference type="PROSITE-ProRule" id="PRU00498"/>
    </source>
</evidence>
<evidence type="ECO:0000269" key="4">
    <source>
    </source>
</evidence>
<evidence type="ECO:0000303" key="5">
    <source>
    </source>
</evidence>
<evidence type="ECO:0000305" key="6"/>
<organism>
    <name type="scientific">Petunia hybrida</name>
    <name type="common">Petunia</name>
    <dbReference type="NCBI Taxonomy" id="4102"/>
    <lineage>
        <taxon>Eukaryota</taxon>
        <taxon>Viridiplantae</taxon>
        <taxon>Streptophyta</taxon>
        <taxon>Embryophyta</taxon>
        <taxon>Tracheophyta</taxon>
        <taxon>Spermatophyta</taxon>
        <taxon>Magnoliopsida</taxon>
        <taxon>eudicotyledons</taxon>
        <taxon>Gunneridae</taxon>
        <taxon>Pentapetalae</taxon>
        <taxon>asterids</taxon>
        <taxon>lamiids</taxon>
        <taxon>Solanales</taxon>
        <taxon>Solanaceae</taxon>
        <taxon>Petunioideae</taxon>
        <taxon>Petunia</taxon>
    </lineage>
</organism>